<gene>
    <name evidence="1" type="primary">thyX</name>
    <name type="ordered locus">WD_1198</name>
</gene>
<comment type="function">
    <text evidence="1">Catalyzes the reductive methylation of 2'-deoxyuridine-5'-monophosphate (dUMP) to 2'-deoxythymidine-5'-monophosphate (dTMP) while utilizing 5,10-methylenetetrahydrofolate (mTHF) as the methyl donor, and NADPH and FADH(2) as the reductant.</text>
</comment>
<comment type="catalytic activity">
    <reaction evidence="1">
        <text>dUMP + (6R)-5,10-methylene-5,6,7,8-tetrahydrofolate + NADPH + H(+) = dTMP + (6S)-5,6,7,8-tetrahydrofolate + NADP(+)</text>
        <dbReference type="Rhea" id="RHEA:29043"/>
        <dbReference type="ChEBI" id="CHEBI:15378"/>
        <dbReference type="ChEBI" id="CHEBI:15636"/>
        <dbReference type="ChEBI" id="CHEBI:57453"/>
        <dbReference type="ChEBI" id="CHEBI:57783"/>
        <dbReference type="ChEBI" id="CHEBI:58349"/>
        <dbReference type="ChEBI" id="CHEBI:63528"/>
        <dbReference type="ChEBI" id="CHEBI:246422"/>
        <dbReference type="EC" id="2.1.1.148"/>
    </reaction>
</comment>
<comment type="cofactor">
    <cofactor evidence="1">
        <name>FAD</name>
        <dbReference type="ChEBI" id="CHEBI:57692"/>
    </cofactor>
    <text evidence="1">Binds 4 FAD per tetramer. Each FAD binding site is formed by three monomers.</text>
</comment>
<comment type="pathway">
    <text evidence="1">Pyrimidine metabolism; dTTP biosynthesis.</text>
</comment>
<comment type="subunit">
    <text evidence="1">Homotetramer.</text>
</comment>
<comment type="similarity">
    <text evidence="1">Belongs to the thymidylate synthase ThyX family.</text>
</comment>
<dbReference type="EC" id="2.1.1.148" evidence="1"/>
<dbReference type="EMBL" id="AE017196">
    <property type="protein sequence ID" value="AAS14844.1"/>
    <property type="molecule type" value="Genomic_DNA"/>
</dbReference>
<dbReference type="RefSeq" id="WP_010082033.1">
    <property type="nucleotide sequence ID" value="NZ_OX384529.1"/>
</dbReference>
<dbReference type="SMR" id="Q73FX5"/>
<dbReference type="EnsemblBacteria" id="AAS14844">
    <property type="protein sequence ID" value="AAS14844"/>
    <property type="gene ID" value="WD_1198"/>
</dbReference>
<dbReference type="GeneID" id="70036664"/>
<dbReference type="KEGG" id="wol:WD_1198"/>
<dbReference type="eggNOG" id="COG1351">
    <property type="taxonomic scope" value="Bacteria"/>
</dbReference>
<dbReference type="UniPathway" id="UPA00575"/>
<dbReference type="Proteomes" id="UP000008215">
    <property type="component" value="Chromosome"/>
</dbReference>
<dbReference type="GO" id="GO:0050660">
    <property type="term" value="F:flavin adenine dinucleotide binding"/>
    <property type="evidence" value="ECO:0007669"/>
    <property type="project" value="InterPro"/>
</dbReference>
<dbReference type="GO" id="GO:0070402">
    <property type="term" value="F:NADPH binding"/>
    <property type="evidence" value="ECO:0007669"/>
    <property type="project" value="TreeGrafter"/>
</dbReference>
<dbReference type="GO" id="GO:0050797">
    <property type="term" value="F:thymidylate synthase (FAD) activity"/>
    <property type="evidence" value="ECO:0007669"/>
    <property type="project" value="UniProtKB-UniRule"/>
</dbReference>
<dbReference type="GO" id="GO:0004799">
    <property type="term" value="F:thymidylate synthase activity"/>
    <property type="evidence" value="ECO:0007669"/>
    <property type="project" value="TreeGrafter"/>
</dbReference>
<dbReference type="GO" id="GO:0006231">
    <property type="term" value="P:dTMP biosynthetic process"/>
    <property type="evidence" value="ECO:0007669"/>
    <property type="project" value="UniProtKB-UniRule"/>
</dbReference>
<dbReference type="GO" id="GO:0006235">
    <property type="term" value="P:dTTP biosynthetic process"/>
    <property type="evidence" value="ECO:0007669"/>
    <property type="project" value="UniProtKB-UniRule"/>
</dbReference>
<dbReference type="GO" id="GO:0032259">
    <property type="term" value="P:methylation"/>
    <property type="evidence" value="ECO:0007669"/>
    <property type="project" value="UniProtKB-KW"/>
</dbReference>
<dbReference type="CDD" id="cd20175">
    <property type="entry name" value="ThyX"/>
    <property type="match status" value="1"/>
</dbReference>
<dbReference type="Gene3D" id="3.30.1360.170">
    <property type="match status" value="1"/>
</dbReference>
<dbReference type="HAMAP" id="MF_01408">
    <property type="entry name" value="ThyX"/>
    <property type="match status" value="1"/>
</dbReference>
<dbReference type="InterPro" id="IPR003669">
    <property type="entry name" value="Thymidylate_synthase_ThyX"/>
</dbReference>
<dbReference type="InterPro" id="IPR036098">
    <property type="entry name" value="Thymidylate_synthase_ThyX_sf"/>
</dbReference>
<dbReference type="NCBIfam" id="TIGR02170">
    <property type="entry name" value="thyX"/>
    <property type="match status" value="1"/>
</dbReference>
<dbReference type="PANTHER" id="PTHR34934">
    <property type="entry name" value="FLAVIN-DEPENDENT THYMIDYLATE SYNTHASE"/>
    <property type="match status" value="1"/>
</dbReference>
<dbReference type="PANTHER" id="PTHR34934:SF1">
    <property type="entry name" value="FLAVIN-DEPENDENT THYMIDYLATE SYNTHASE"/>
    <property type="match status" value="1"/>
</dbReference>
<dbReference type="Pfam" id="PF02511">
    <property type="entry name" value="Thy1"/>
    <property type="match status" value="1"/>
</dbReference>
<dbReference type="SUPFAM" id="SSF69796">
    <property type="entry name" value="Thymidylate synthase-complementing protein Thy1"/>
    <property type="match status" value="1"/>
</dbReference>
<dbReference type="PROSITE" id="PS51331">
    <property type="entry name" value="THYX"/>
    <property type="match status" value="1"/>
</dbReference>
<evidence type="ECO:0000255" key="1">
    <source>
        <dbReference type="HAMAP-Rule" id="MF_01408"/>
    </source>
</evidence>
<evidence type="ECO:0000255" key="2">
    <source>
        <dbReference type="PROSITE-ProRule" id="PRU00661"/>
    </source>
</evidence>
<evidence type="ECO:0000256" key="3">
    <source>
        <dbReference type="SAM" id="MobiDB-lite"/>
    </source>
</evidence>
<keyword id="KW-0274">FAD</keyword>
<keyword id="KW-0285">Flavoprotein</keyword>
<keyword id="KW-0489">Methyltransferase</keyword>
<keyword id="KW-0521">NADP</keyword>
<keyword id="KW-0545">Nucleotide biosynthesis</keyword>
<keyword id="KW-0808">Transferase</keyword>
<reference key="1">
    <citation type="journal article" date="2004" name="PLoS Biol.">
        <title>Phylogenomics of the reproductive parasite Wolbachia pipientis wMel: a streamlined genome overrun by mobile genetic elements.</title>
        <authorList>
            <person name="Wu M."/>
            <person name="Sun L.V."/>
            <person name="Vamathevan J.J."/>
            <person name="Riegler M."/>
            <person name="DeBoy R.T."/>
            <person name="Brownlie J.C."/>
            <person name="McGraw E.A."/>
            <person name="Martin W."/>
            <person name="Esser C."/>
            <person name="Ahmadinejad N."/>
            <person name="Wiegand C."/>
            <person name="Madupu R."/>
            <person name="Beanan M.J."/>
            <person name="Brinkac L.M."/>
            <person name="Daugherty S.C."/>
            <person name="Durkin A.S."/>
            <person name="Kolonay J.F."/>
            <person name="Nelson W.C."/>
            <person name="Mohamoud Y."/>
            <person name="Lee P."/>
            <person name="Berry K.J."/>
            <person name="Young M.B."/>
            <person name="Utterback T.R."/>
            <person name="Weidman J.F."/>
            <person name="Nierman W.C."/>
            <person name="Paulsen I.T."/>
            <person name="Nelson K.E."/>
            <person name="Tettelin H."/>
            <person name="O'Neill S.L."/>
            <person name="Eisen J.A."/>
        </authorList>
    </citation>
    <scope>NUCLEOTIDE SEQUENCE [LARGE SCALE GENOMIC DNA]</scope>
</reference>
<feature type="chain" id="PRO_0000175586" description="Flavin-dependent thymidylate synthase">
    <location>
        <begin position="1"/>
        <end position="284"/>
    </location>
</feature>
<feature type="domain" description="ThyX" evidence="2">
    <location>
        <begin position="27"/>
        <end position="237"/>
    </location>
</feature>
<feature type="region of interest" description="Disordered" evidence="3">
    <location>
        <begin position="122"/>
        <end position="142"/>
    </location>
</feature>
<feature type="short sequence motif" description="ThyX motif" evidence="1">
    <location>
        <begin position="96"/>
        <end position="106"/>
    </location>
</feature>
<feature type="compositionally biased region" description="Polar residues" evidence="3">
    <location>
        <begin position="125"/>
        <end position="134"/>
    </location>
</feature>
<feature type="active site" description="Involved in ionization of N3 of dUMP, leading to its activation" evidence="1">
    <location>
        <position position="203"/>
    </location>
</feature>
<feature type="binding site" evidence="1">
    <location>
        <position position="73"/>
    </location>
    <ligand>
        <name>FAD</name>
        <dbReference type="ChEBI" id="CHEBI:57692"/>
        <note>ligand shared between neighboring subunits</note>
    </ligand>
</feature>
<feature type="binding site" evidence="1">
    <location>
        <begin position="93"/>
        <end position="96"/>
    </location>
    <ligand>
        <name>dUMP</name>
        <dbReference type="ChEBI" id="CHEBI:246422"/>
        <note>ligand shared between dimeric partners</note>
    </ligand>
</feature>
<feature type="binding site" evidence="1">
    <location>
        <begin position="96"/>
        <end position="98"/>
    </location>
    <ligand>
        <name>FAD</name>
        <dbReference type="ChEBI" id="CHEBI:57692"/>
        <note>ligand shared between neighboring subunits</note>
    </ligand>
</feature>
<feature type="binding site" description="in other chain" evidence="1">
    <location>
        <begin position="104"/>
        <end position="108"/>
    </location>
    <ligand>
        <name>dUMP</name>
        <dbReference type="ChEBI" id="CHEBI:246422"/>
        <note>ligand shared between dimeric partners</note>
    </ligand>
</feature>
<feature type="binding site" evidence="1">
    <location>
        <position position="104"/>
    </location>
    <ligand>
        <name>FAD</name>
        <dbReference type="ChEBI" id="CHEBI:57692"/>
        <note>ligand shared between neighboring subunits</note>
    </ligand>
</feature>
<feature type="binding site" description="in other chain" evidence="1">
    <location>
        <position position="176"/>
    </location>
    <ligand>
        <name>dUMP</name>
        <dbReference type="ChEBI" id="CHEBI:246422"/>
        <note>ligand shared between dimeric partners</note>
    </ligand>
</feature>
<feature type="binding site" evidence="1">
    <location>
        <begin position="192"/>
        <end position="194"/>
    </location>
    <ligand>
        <name>FAD</name>
        <dbReference type="ChEBI" id="CHEBI:57692"/>
        <note>ligand shared between neighboring subunits</note>
    </ligand>
</feature>
<feature type="binding site" evidence="1">
    <location>
        <position position="198"/>
    </location>
    <ligand>
        <name>FAD</name>
        <dbReference type="ChEBI" id="CHEBI:57692"/>
        <note>ligand shared between neighboring subunits</note>
    </ligand>
</feature>
<feature type="binding site" evidence="1">
    <location>
        <position position="203"/>
    </location>
    <ligand>
        <name>dUMP</name>
        <dbReference type="ChEBI" id="CHEBI:246422"/>
        <note>ligand shared between dimeric partners</note>
    </ligand>
</feature>
<organism>
    <name type="scientific">Wolbachia pipientis wMel</name>
    <dbReference type="NCBI Taxonomy" id="163164"/>
    <lineage>
        <taxon>Bacteria</taxon>
        <taxon>Pseudomonadati</taxon>
        <taxon>Pseudomonadota</taxon>
        <taxon>Alphaproteobacteria</taxon>
        <taxon>Rickettsiales</taxon>
        <taxon>Anaplasmataceae</taxon>
        <taxon>Wolbachieae</taxon>
        <taxon>Wolbachia</taxon>
    </lineage>
</organism>
<proteinExistence type="inferred from homology"/>
<sequence>MNEATKRTIVKEIDAILYEEHKVLDHGFIRVVDYMGSDSAIVQAARVSYGKGTKQISQDEALIKYLMRHHHTTPFEMCEIKFHVKLPIFVARQWIRHRTANVNEYSARYSILDNEFYTPKPEQVAKQSDNNKQGSGEAFDPDTSKEIIDSLINDSNLVYSHYEKFIEQGLAREIARTNLMLNYYTQFYWKIDLHNLLHFLKLRADKHAQYEIRVYAEVMLDIIKKWVPLAYNAFVEYCLESACISRTGLEIIRKLIKGENVTREESNIGKREWGELMSILDKQS</sequence>
<protein>
    <recommendedName>
        <fullName evidence="1">Flavin-dependent thymidylate synthase</fullName>
        <shortName evidence="1">FDTS</shortName>
        <ecNumber evidence="1">2.1.1.148</ecNumber>
    </recommendedName>
    <alternativeName>
        <fullName evidence="1">FAD-dependent thymidylate synthase</fullName>
    </alternativeName>
    <alternativeName>
        <fullName evidence="1">Thymidylate synthase ThyX</fullName>
        <shortName evidence="1">TS</shortName>
        <shortName evidence="1">TSase</shortName>
    </alternativeName>
</protein>
<name>THYX_WOLPM</name>
<accession>Q73FX5</accession>